<protein>
    <recommendedName>
        <fullName>Peroxisome proliferator-activated receptor alpha</fullName>
        <shortName>PPAR-alpha</shortName>
    </recommendedName>
    <alternativeName>
        <fullName>Nuclear receptor subfamily 1 group C member 1</fullName>
    </alternativeName>
</protein>
<sequence length="474" mass="52856">MSTIMVDTNSELCILTPLDEDDLESPLSGEFLQDIVDIQDITQTIGDDGSTPFGASEHQFFGNSPGSIGSVSTDLTDTLSPASSPASITFPAASGSAEDAACKSLNLECRVCSDKASGFHYGVHACEGCKGFFRRTIRLKLVYDRCERMCKIQKKNRNKCQYCRFEKCLNVGMSHNAIRFGRMPRSEKAKLKAEVLMCDQDVKDSQMADLLSLARLIYDAYLKNFNMNKVKARAILTGKASNPPFVIHDMETLCMAEKTLVAKLVANGIQNKEAEVRIFHCCQCTSVETVTELTEFAKSIPGFTELDLNDQVTLLKYGVYEAMFAMLASVMNKDGMLVAYGNGFITREFLKSLRKPIGDMMEPKFEFAMKFNALELDDSDLSLFVAALICCGDRPGLVNIPSIEKMQESIVHVLKLHLQSNHPDDSFLFPKLLQKMADLRQLVTEHAQLVQTIKKTETDAALHPLLQEIYRDMY</sequence>
<name>PPARA_XENLA</name>
<keyword id="KW-0010">Activator</keyword>
<keyword id="KW-0238">DNA-binding</keyword>
<keyword id="KW-0446">Lipid-binding</keyword>
<keyword id="KW-0479">Metal-binding</keyword>
<keyword id="KW-0539">Nucleus</keyword>
<keyword id="KW-0675">Receptor</keyword>
<keyword id="KW-1185">Reference proteome</keyword>
<keyword id="KW-0804">Transcription</keyword>
<keyword id="KW-0805">Transcription regulation</keyword>
<keyword id="KW-0862">Zinc</keyword>
<keyword id="KW-0863">Zinc-finger</keyword>
<evidence type="ECO:0000250" key="1"/>
<evidence type="ECO:0000255" key="2">
    <source>
        <dbReference type="PROSITE-ProRule" id="PRU00407"/>
    </source>
</evidence>
<evidence type="ECO:0000255" key="3">
    <source>
        <dbReference type="PROSITE-ProRule" id="PRU01189"/>
    </source>
</evidence>
<evidence type="ECO:0000305" key="4"/>
<accession>P37232</accession>
<organism>
    <name type="scientific">Xenopus laevis</name>
    <name type="common">African clawed frog</name>
    <dbReference type="NCBI Taxonomy" id="8355"/>
    <lineage>
        <taxon>Eukaryota</taxon>
        <taxon>Metazoa</taxon>
        <taxon>Chordata</taxon>
        <taxon>Craniata</taxon>
        <taxon>Vertebrata</taxon>
        <taxon>Euteleostomi</taxon>
        <taxon>Amphibia</taxon>
        <taxon>Batrachia</taxon>
        <taxon>Anura</taxon>
        <taxon>Pipoidea</taxon>
        <taxon>Pipidae</taxon>
        <taxon>Xenopodinae</taxon>
        <taxon>Xenopus</taxon>
        <taxon>Xenopus</taxon>
    </lineage>
</organism>
<comment type="function">
    <text evidence="1">Ligand-activated transcription factor. Key regulator of lipid metabolism. Activated by lipids. Receptor for peroxisome proliferators such as hypolipidemic drugs and fatty acids. Once activated by a ligand, the receptor binds to promoter elements of target genes. Regulates the peroxisomal beta-oxidation pathway of fatty acids (By similarity).</text>
</comment>
<comment type="subunit">
    <text>Heterodimer with the retinoid X receptor.</text>
</comment>
<comment type="subcellular location">
    <subcellularLocation>
        <location>Nucleus</location>
    </subcellularLocation>
</comment>
<comment type="tissue specificity">
    <text>Ubiquitous.</text>
</comment>
<comment type="developmental stage">
    <text>Oocytes, embryos, and adults.</text>
</comment>
<comment type="similarity">
    <text evidence="4">Belongs to the nuclear hormone receptor family. NR1 subfamily.</text>
</comment>
<dbReference type="EMBL" id="M84161">
    <property type="protein sequence ID" value="AAA49935.1"/>
    <property type="molecule type" value="mRNA"/>
</dbReference>
<dbReference type="PIR" id="A42214">
    <property type="entry name" value="A42214"/>
</dbReference>
<dbReference type="SMR" id="P37232"/>
<dbReference type="AGR" id="Xenbase:XB-GENE-17339020"/>
<dbReference type="Xenbase" id="XB-GENE-17339020">
    <property type="gene designation" value="ppara.S"/>
</dbReference>
<dbReference type="Proteomes" id="UP000186698">
    <property type="component" value="Unplaced"/>
</dbReference>
<dbReference type="GO" id="GO:0005634">
    <property type="term" value="C:nucleus"/>
    <property type="evidence" value="ECO:0000318"/>
    <property type="project" value="GO_Central"/>
</dbReference>
<dbReference type="GO" id="GO:0001227">
    <property type="term" value="F:DNA-binding transcription repressor activity, RNA polymerase II-specific"/>
    <property type="evidence" value="ECO:0000318"/>
    <property type="project" value="GO_Central"/>
</dbReference>
<dbReference type="GO" id="GO:0008289">
    <property type="term" value="F:lipid binding"/>
    <property type="evidence" value="ECO:0007669"/>
    <property type="project" value="UniProtKB-KW"/>
</dbReference>
<dbReference type="GO" id="GO:0004879">
    <property type="term" value="F:nuclear receptor activity"/>
    <property type="evidence" value="ECO:0000318"/>
    <property type="project" value="GO_Central"/>
</dbReference>
<dbReference type="GO" id="GO:0000978">
    <property type="term" value="F:RNA polymerase II cis-regulatory region sequence-specific DNA binding"/>
    <property type="evidence" value="ECO:0000318"/>
    <property type="project" value="GO_Central"/>
</dbReference>
<dbReference type="GO" id="GO:0008270">
    <property type="term" value="F:zinc ion binding"/>
    <property type="evidence" value="ECO:0007669"/>
    <property type="project" value="UniProtKB-KW"/>
</dbReference>
<dbReference type="GO" id="GO:0030154">
    <property type="term" value="P:cell differentiation"/>
    <property type="evidence" value="ECO:0000318"/>
    <property type="project" value="GO_Central"/>
</dbReference>
<dbReference type="GO" id="GO:0006631">
    <property type="term" value="P:fatty acid metabolic process"/>
    <property type="evidence" value="ECO:0000318"/>
    <property type="project" value="GO_Central"/>
</dbReference>
<dbReference type="GO" id="GO:0009755">
    <property type="term" value="P:hormone-mediated signaling pathway"/>
    <property type="evidence" value="ECO:0000318"/>
    <property type="project" value="GO_Central"/>
</dbReference>
<dbReference type="GO" id="GO:0030522">
    <property type="term" value="P:intracellular receptor signaling pathway"/>
    <property type="evidence" value="ECO:0000318"/>
    <property type="project" value="GO_Central"/>
</dbReference>
<dbReference type="GO" id="GO:0010887">
    <property type="term" value="P:negative regulation of cholesterol storage"/>
    <property type="evidence" value="ECO:0000318"/>
    <property type="project" value="GO_Central"/>
</dbReference>
<dbReference type="GO" id="GO:0050728">
    <property type="term" value="P:negative regulation of inflammatory response"/>
    <property type="evidence" value="ECO:0000318"/>
    <property type="project" value="GO_Central"/>
</dbReference>
<dbReference type="GO" id="GO:0000122">
    <property type="term" value="P:negative regulation of transcription by RNA polymerase II"/>
    <property type="evidence" value="ECO:0000318"/>
    <property type="project" value="GO_Central"/>
</dbReference>
<dbReference type="GO" id="GO:0045923">
    <property type="term" value="P:positive regulation of fatty acid metabolic process"/>
    <property type="evidence" value="ECO:0000318"/>
    <property type="project" value="GO_Central"/>
</dbReference>
<dbReference type="GO" id="GO:0045944">
    <property type="term" value="P:positive regulation of transcription by RNA polymerase II"/>
    <property type="evidence" value="ECO:0000318"/>
    <property type="project" value="GO_Central"/>
</dbReference>
<dbReference type="CDD" id="cd06965">
    <property type="entry name" value="NR_DBD_Ppar"/>
    <property type="match status" value="1"/>
</dbReference>
<dbReference type="CDD" id="cd06932">
    <property type="entry name" value="NR_LBD_PPAR"/>
    <property type="match status" value="1"/>
</dbReference>
<dbReference type="FunFam" id="1.10.565.10:FF:000013">
    <property type="entry name" value="Peroxisome proliferator-activated receptor delta"/>
    <property type="match status" value="1"/>
</dbReference>
<dbReference type="FunFam" id="3.30.50.10:FF:000010">
    <property type="entry name" value="Peroxisome proliferator-activated receptor gamma"/>
    <property type="match status" value="1"/>
</dbReference>
<dbReference type="Gene3D" id="3.30.50.10">
    <property type="entry name" value="Erythroid Transcription Factor GATA-1, subunit A"/>
    <property type="match status" value="1"/>
</dbReference>
<dbReference type="Gene3D" id="1.10.565.10">
    <property type="entry name" value="Retinoid X Receptor"/>
    <property type="match status" value="1"/>
</dbReference>
<dbReference type="InterPro" id="IPR003074">
    <property type="entry name" value="1Cnucl_rcpt"/>
</dbReference>
<dbReference type="InterPro" id="IPR035500">
    <property type="entry name" value="NHR-like_dom_sf"/>
</dbReference>
<dbReference type="InterPro" id="IPR000536">
    <property type="entry name" value="Nucl_hrmn_rcpt_lig-bd"/>
</dbReference>
<dbReference type="InterPro" id="IPR050234">
    <property type="entry name" value="Nuclear_hormone_rcpt_NR1"/>
</dbReference>
<dbReference type="InterPro" id="IPR001723">
    <property type="entry name" value="Nuclear_hrmn_rcpt"/>
</dbReference>
<dbReference type="InterPro" id="IPR003076">
    <property type="entry name" value="PPAR-alpha"/>
</dbReference>
<dbReference type="InterPro" id="IPR001628">
    <property type="entry name" value="Znf_hrmn_rcpt"/>
</dbReference>
<dbReference type="InterPro" id="IPR013088">
    <property type="entry name" value="Znf_NHR/GATA"/>
</dbReference>
<dbReference type="PANTHER" id="PTHR24082">
    <property type="entry name" value="NUCLEAR HORMONE RECEPTOR"/>
    <property type="match status" value="1"/>
</dbReference>
<dbReference type="PANTHER" id="PTHR24082:SF197">
    <property type="entry name" value="PEROXISOME PROLIFERATOR-ACTIVATED RECEPTOR ALPHA"/>
    <property type="match status" value="1"/>
</dbReference>
<dbReference type="Pfam" id="PF00104">
    <property type="entry name" value="Hormone_recep"/>
    <property type="match status" value="1"/>
</dbReference>
<dbReference type="Pfam" id="PF00105">
    <property type="entry name" value="zf-C4"/>
    <property type="match status" value="1"/>
</dbReference>
<dbReference type="PRINTS" id="PR01288">
    <property type="entry name" value="PROXISOMEPAR"/>
</dbReference>
<dbReference type="PRINTS" id="PR01289">
    <property type="entry name" value="PROXISOMPAAR"/>
</dbReference>
<dbReference type="PRINTS" id="PR00398">
    <property type="entry name" value="STRDHORMONER"/>
</dbReference>
<dbReference type="PRINTS" id="PR00047">
    <property type="entry name" value="STROIDFINGER"/>
</dbReference>
<dbReference type="SMART" id="SM00430">
    <property type="entry name" value="HOLI"/>
    <property type="match status" value="1"/>
</dbReference>
<dbReference type="SMART" id="SM00399">
    <property type="entry name" value="ZnF_C4"/>
    <property type="match status" value="1"/>
</dbReference>
<dbReference type="SUPFAM" id="SSF57716">
    <property type="entry name" value="Glucocorticoid receptor-like (DNA-binding domain)"/>
    <property type="match status" value="1"/>
</dbReference>
<dbReference type="SUPFAM" id="SSF48508">
    <property type="entry name" value="Nuclear receptor ligand-binding domain"/>
    <property type="match status" value="1"/>
</dbReference>
<dbReference type="PROSITE" id="PS51843">
    <property type="entry name" value="NR_LBD"/>
    <property type="match status" value="1"/>
</dbReference>
<dbReference type="PROSITE" id="PS00031">
    <property type="entry name" value="NUCLEAR_REC_DBD_1"/>
    <property type="match status" value="1"/>
</dbReference>
<dbReference type="PROSITE" id="PS51030">
    <property type="entry name" value="NUCLEAR_REC_DBD_2"/>
    <property type="match status" value="1"/>
</dbReference>
<reference key="1">
    <citation type="journal article" date="1992" name="Cell">
        <title>Control of the peroxisomal beta-oxidation pathway by a novel family of nuclear hormone receptors.</title>
        <authorList>
            <person name="Dreyer C."/>
            <person name="Krey G."/>
            <person name="Keller H."/>
            <person name="Givel F."/>
            <person name="Helftenbein G."/>
            <person name="Wahli W."/>
        </authorList>
    </citation>
    <scope>NUCLEOTIDE SEQUENCE [MRNA]</scope>
</reference>
<reference key="2">
    <citation type="journal article" date="1993" name="J. Steroid Biochem. Mol. Biol.">
        <title>Xenopus peroxisome proliferator activated receptors: genomic organization, response element recognition, heterodimer formation with retinoid X receptor and activation by fatty acids.</title>
        <authorList>
            <person name="Krey G."/>
            <person name="Keller H."/>
            <person name="Mahfoudi A."/>
            <person name="Medin J."/>
            <person name="Ozato K."/>
            <person name="Dreyer C."/>
            <person name="Wahli W."/>
        </authorList>
    </citation>
    <scope>CHARACTERIZATION</scope>
</reference>
<feature type="chain" id="PRO_0000053485" description="Peroxisome proliferator-activated receptor alpha">
    <location>
        <begin position="1"/>
        <end position="474"/>
    </location>
</feature>
<feature type="domain" description="NR LBD" evidence="3">
    <location>
        <begin position="245"/>
        <end position="472"/>
    </location>
</feature>
<feature type="DNA-binding region" description="Nuclear receptor" evidence="2">
    <location>
        <begin position="106"/>
        <end position="180"/>
    </location>
</feature>
<feature type="zinc finger region" description="NR C4-type" evidence="2">
    <location>
        <begin position="109"/>
        <end position="129"/>
    </location>
</feature>
<feature type="zinc finger region" description="NR C4-type" evidence="2">
    <location>
        <begin position="146"/>
        <end position="168"/>
    </location>
</feature>
<proteinExistence type="evidence at protein level"/>
<gene>
    <name type="primary">ppara</name>
    <name type="synonym">nr1c1</name>
</gene>